<organism>
    <name type="scientific">Deinococcus geothermalis (strain DSM 11300 / CIP 105573 / AG-3a)</name>
    <dbReference type="NCBI Taxonomy" id="319795"/>
    <lineage>
        <taxon>Bacteria</taxon>
        <taxon>Thermotogati</taxon>
        <taxon>Deinococcota</taxon>
        <taxon>Deinococci</taxon>
        <taxon>Deinococcales</taxon>
        <taxon>Deinococcaceae</taxon>
        <taxon>Deinococcus</taxon>
    </lineage>
</organism>
<proteinExistence type="inferred from homology"/>
<reference key="1">
    <citation type="submission" date="2006-04" db="EMBL/GenBank/DDBJ databases">
        <title>Complete sequence of chromosome of Deinococcus geothermalis DSM 11300.</title>
        <authorList>
            <person name="Copeland A."/>
            <person name="Lucas S."/>
            <person name="Lapidus A."/>
            <person name="Barry K."/>
            <person name="Detter J.C."/>
            <person name="Glavina del Rio T."/>
            <person name="Hammon N."/>
            <person name="Israni S."/>
            <person name="Dalin E."/>
            <person name="Tice H."/>
            <person name="Pitluck S."/>
            <person name="Brettin T."/>
            <person name="Bruce D."/>
            <person name="Han C."/>
            <person name="Tapia R."/>
            <person name="Saunders E."/>
            <person name="Gilna P."/>
            <person name="Schmutz J."/>
            <person name="Larimer F."/>
            <person name="Land M."/>
            <person name="Hauser L."/>
            <person name="Kyrpides N."/>
            <person name="Kim E."/>
            <person name="Daly M.J."/>
            <person name="Fredrickson J.K."/>
            <person name="Makarova K.S."/>
            <person name="Gaidamakova E.K."/>
            <person name="Zhai M."/>
            <person name="Richardson P."/>
        </authorList>
    </citation>
    <scope>NUCLEOTIDE SEQUENCE [LARGE SCALE GENOMIC DNA]</scope>
    <source>
        <strain>DSM 11300 / CIP 105573 / AG-3a</strain>
    </source>
</reference>
<comment type="function">
    <text evidence="1">Specifically methylates guanosine-37 in various tRNAs.</text>
</comment>
<comment type="catalytic activity">
    <reaction evidence="1">
        <text>guanosine(37) in tRNA + S-adenosyl-L-methionine = N(1)-methylguanosine(37) in tRNA + S-adenosyl-L-homocysteine + H(+)</text>
        <dbReference type="Rhea" id="RHEA:36899"/>
        <dbReference type="Rhea" id="RHEA-COMP:10145"/>
        <dbReference type="Rhea" id="RHEA-COMP:10147"/>
        <dbReference type="ChEBI" id="CHEBI:15378"/>
        <dbReference type="ChEBI" id="CHEBI:57856"/>
        <dbReference type="ChEBI" id="CHEBI:59789"/>
        <dbReference type="ChEBI" id="CHEBI:73542"/>
        <dbReference type="ChEBI" id="CHEBI:74269"/>
        <dbReference type="EC" id="2.1.1.228"/>
    </reaction>
</comment>
<comment type="subunit">
    <text evidence="1">Homodimer.</text>
</comment>
<comment type="subcellular location">
    <subcellularLocation>
        <location evidence="1">Cytoplasm</location>
    </subcellularLocation>
</comment>
<comment type="similarity">
    <text evidence="1">Belongs to the RNA methyltransferase TrmD family.</text>
</comment>
<dbReference type="EC" id="2.1.1.228" evidence="1"/>
<dbReference type="EMBL" id="CP000359">
    <property type="protein sequence ID" value="ABF45781.1"/>
    <property type="molecule type" value="Genomic_DNA"/>
</dbReference>
<dbReference type="RefSeq" id="WP_011530615.1">
    <property type="nucleotide sequence ID" value="NC_008025.1"/>
</dbReference>
<dbReference type="SMR" id="Q1IYA3"/>
<dbReference type="STRING" id="319795.Dgeo_1486"/>
<dbReference type="KEGG" id="dge:Dgeo_1486"/>
<dbReference type="eggNOG" id="COG0336">
    <property type="taxonomic scope" value="Bacteria"/>
</dbReference>
<dbReference type="HOGENOM" id="CLU_047363_0_1_0"/>
<dbReference type="Proteomes" id="UP000002431">
    <property type="component" value="Chromosome"/>
</dbReference>
<dbReference type="GO" id="GO:0005829">
    <property type="term" value="C:cytosol"/>
    <property type="evidence" value="ECO:0007669"/>
    <property type="project" value="TreeGrafter"/>
</dbReference>
<dbReference type="GO" id="GO:0052906">
    <property type="term" value="F:tRNA (guanine(37)-N1)-methyltransferase activity"/>
    <property type="evidence" value="ECO:0007669"/>
    <property type="project" value="UniProtKB-UniRule"/>
</dbReference>
<dbReference type="GO" id="GO:0002939">
    <property type="term" value="P:tRNA N1-guanine methylation"/>
    <property type="evidence" value="ECO:0007669"/>
    <property type="project" value="TreeGrafter"/>
</dbReference>
<dbReference type="CDD" id="cd18080">
    <property type="entry name" value="TrmD-like"/>
    <property type="match status" value="1"/>
</dbReference>
<dbReference type="FunFam" id="1.10.1270.20:FF:000001">
    <property type="entry name" value="tRNA (guanine-N(1)-)-methyltransferase"/>
    <property type="match status" value="1"/>
</dbReference>
<dbReference type="Gene3D" id="3.40.1280.10">
    <property type="match status" value="1"/>
</dbReference>
<dbReference type="Gene3D" id="1.10.1270.20">
    <property type="entry name" value="tRNA(m1g37)methyltransferase, domain 2"/>
    <property type="match status" value="1"/>
</dbReference>
<dbReference type="HAMAP" id="MF_00605">
    <property type="entry name" value="TrmD"/>
    <property type="match status" value="1"/>
</dbReference>
<dbReference type="InterPro" id="IPR029028">
    <property type="entry name" value="Alpha/beta_knot_MTases"/>
</dbReference>
<dbReference type="InterPro" id="IPR023148">
    <property type="entry name" value="tRNA_m1G_MeTrfase_C_sf"/>
</dbReference>
<dbReference type="InterPro" id="IPR002649">
    <property type="entry name" value="tRNA_m1G_MeTrfase_TrmD"/>
</dbReference>
<dbReference type="InterPro" id="IPR029026">
    <property type="entry name" value="tRNA_m1G_MTases_N"/>
</dbReference>
<dbReference type="InterPro" id="IPR016009">
    <property type="entry name" value="tRNA_MeTrfase_TRMD/TRM10"/>
</dbReference>
<dbReference type="NCBIfam" id="NF000648">
    <property type="entry name" value="PRK00026.1"/>
    <property type="match status" value="1"/>
</dbReference>
<dbReference type="NCBIfam" id="TIGR00088">
    <property type="entry name" value="trmD"/>
    <property type="match status" value="1"/>
</dbReference>
<dbReference type="PANTHER" id="PTHR46417">
    <property type="entry name" value="TRNA (GUANINE-N(1)-)-METHYLTRANSFERASE"/>
    <property type="match status" value="1"/>
</dbReference>
<dbReference type="PANTHER" id="PTHR46417:SF1">
    <property type="entry name" value="TRNA (GUANINE-N(1)-)-METHYLTRANSFERASE"/>
    <property type="match status" value="1"/>
</dbReference>
<dbReference type="Pfam" id="PF01746">
    <property type="entry name" value="tRNA_m1G_MT"/>
    <property type="match status" value="1"/>
</dbReference>
<dbReference type="PIRSF" id="PIRSF000386">
    <property type="entry name" value="tRNA_mtase"/>
    <property type="match status" value="1"/>
</dbReference>
<dbReference type="SUPFAM" id="SSF75217">
    <property type="entry name" value="alpha/beta knot"/>
    <property type="match status" value="1"/>
</dbReference>
<keyword id="KW-0963">Cytoplasm</keyword>
<keyword id="KW-0489">Methyltransferase</keyword>
<keyword id="KW-0949">S-adenosyl-L-methionine</keyword>
<keyword id="KW-0808">Transferase</keyword>
<keyword id="KW-0819">tRNA processing</keyword>
<gene>
    <name evidence="1" type="primary">trmD</name>
    <name type="ordered locus">Dgeo_1486</name>
</gene>
<evidence type="ECO:0000255" key="1">
    <source>
        <dbReference type="HAMAP-Rule" id="MF_00605"/>
    </source>
</evidence>
<evidence type="ECO:0000256" key="2">
    <source>
        <dbReference type="SAM" id="MobiDB-lite"/>
    </source>
</evidence>
<accession>Q1IYA3</accession>
<protein>
    <recommendedName>
        <fullName evidence="1">tRNA (guanine-N(1)-)-methyltransferase</fullName>
        <ecNumber evidence="1">2.1.1.228</ecNumber>
    </recommendedName>
    <alternativeName>
        <fullName evidence="1">M1G-methyltransferase</fullName>
    </alternativeName>
    <alternativeName>
        <fullName evidence="1">tRNA [GM37] methyltransferase</fullName>
    </alternativeName>
</protein>
<sequence length="265" mass="28752">MLTFSFLTLFPELLAPFASEALVGKARARGLLDVQLVNMRDFAENKHLKVDDTPYGGGAGMVIRVDVVERALASLPPADEVILLTPAGERFTQQMAEELSRTTHLAFLCGRYEGFDARVERLATRELSLGDFVMMGGEAAAACVLEAVARLVPGVLGDEDSHRADSFSSGLLDYPEYTRPAEWRGEGVPEVLKGGNHAAVARWRREQALARTLARRPDLLPSAGLTPQDSAYLLTLGVTPEQLAAWGAPPPPLPKRRRGAKPNPN</sequence>
<feature type="chain" id="PRO_0000257413" description="tRNA (guanine-N(1)-)-methyltransferase">
    <location>
        <begin position="1"/>
        <end position="265"/>
    </location>
</feature>
<feature type="region of interest" description="Disordered" evidence="2">
    <location>
        <begin position="243"/>
        <end position="265"/>
    </location>
</feature>
<feature type="compositionally biased region" description="Basic residues" evidence="2">
    <location>
        <begin position="254"/>
        <end position="265"/>
    </location>
</feature>
<feature type="binding site" evidence="1">
    <location>
        <position position="110"/>
    </location>
    <ligand>
        <name>S-adenosyl-L-methionine</name>
        <dbReference type="ChEBI" id="CHEBI:59789"/>
    </ligand>
</feature>
<feature type="binding site" evidence="1">
    <location>
        <begin position="129"/>
        <end position="134"/>
    </location>
    <ligand>
        <name>S-adenosyl-L-methionine</name>
        <dbReference type="ChEBI" id="CHEBI:59789"/>
    </ligand>
</feature>
<name>TRMD_DEIGD</name>